<evidence type="ECO:0000255" key="1">
    <source>
        <dbReference type="PROSITE-ProRule" id="PRU00388"/>
    </source>
</evidence>
<evidence type="ECO:0000255" key="2">
    <source>
        <dbReference type="PROSITE-ProRule" id="PRU10133"/>
    </source>
</evidence>
<protein>
    <recommendedName>
        <fullName>Ubiquitin-conjugating enzyme E2-16 kDa</fullName>
        <ecNumber>2.3.2.23</ecNumber>
    </recommendedName>
    <alternativeName>
        <fullName>Colletotrichum hard-surface-induced protein 1</fullName>
    </alternativeName>
    <alternativeName>
        <fullName>E2 ubiquitin-conjugating enzyme 1</fullName>
    </alternativeName>
    <alternativeName>
        <fullName>Ubiquitin carrier protein</fullName>
    </alternativeName>
    <alternativeName>
        <fullName>Ubiquitin-protein ligase</fullName>
    </alternativeName>
</protein>
<gene>
    <name type="primary">UBC1</name>
    <name type="synonym">CHIP1</name>
</gene>
<reference key="1">
    <citation type="journal article" date="1998" name="J. Bacteriol.">
        <title>Identification of a gene product induced by hard-surface contact of Colletotrichum gloeosporioides conidia as a ubiquitin-conjugating enzyme by yeast complementation.</title>
        <authorList>
            <person name="Liu Z.-M."/>
            <person name="Kolattukudy P.E."/>
        </authorList>
    </citation>
    <scope>NUCLEOTIDE SEQUENCE [MRNA]</scope>
    <source>
        <tissue>Conidium</tissue>
    </source>
</reference>
<feature type="chain" id="PRO_0000082542" description="Ubiquitin-conjugating enzyme E2-16 kDa">
    <location>
        <begin position="1"/>
        <end position="147"/>
    </location>
</feature>
<feature type="domain" description="UBC core" evidence="1">
    <location>
        <begin position="1"/>
        <end position="147"/>
    </location>
</feature>
<feature type="active site" description="Glycyl thioester intermediate" evidence="1 2">
    <location>
        <position position="107"/>
    </location>
</feature>
<accession>O74196</accession>
<proteinExistence type="evidence at transcript level"/>
<name>UBC1_COLGL</name>
<sequence length="147" mass="16528">MAFKRINKELTDLGRDPPSSCSAGPVGEDLFHWQATIMGPGDSPYSGGVFFLAIHFPTDYPFKPPKVNFTTRIYHPNINSNGSICLDILRDQWSPALTISKVLLSICSMLTDPNPDEPLVPEIAHVYKTDRARYEATAREWTRKYAI</sequence>
<dbReference type="EC" id="2.3.2.23"/>
<dbReference type="EMBL" id="AF030296">
    <property type="protein sequence ID" value="AAC39499.1"/>
    <property type="molecule type" value="mRNA"/>
</dbReference>
<dbReference type="SMR" id="O74196"/>
<dbReference type="UniPathway" id="UPA00143"/>
<dbReference type="GO" id="GO:0005524">
    <property type="term" value="F:ATP binding"/>
    <property type="evidence" value="ECO:0007669"/>
    <property type="project" value="UniProtKB-KW"/>
</dbReference>
<dbReference type="GO" id="GO:0061631">
    <property type="term" value="F:ubiquitin conjugating enzyme activity"/>
    <property type="evidence" value="ECO:0007669"/>
    <property type="project" value="UniProtKB-EC"/>
</dbReference>
<dbReference type="GO" id="GO:0016567">
    <property type="term" value="P:protein ubiquitination"/>
    <property type="evidence" value="ECO:0007669"/>
    <property type="project" value="UniProtKB-UniPathway"/>
</dbReference>
<dbReference type="CDD" id="cd23792">
    <property type="entry name" value="UBCc_UBE2D"/>
    <property type="match status" value="1"/>
</dbReference>
<dbReference type="FunFam" id="3.10.110.10:FF:000010">
    <property type="entry name" value="Ubiquitin-conjugating enzyme E2-16 kDa"/>
    <property type="match status" value="1"/>
</dbReference>
<dbReference type="Gene3D" id="3.10.110.10">
    <property type="entry name" value="Ubiquitin Conjugating Enzyme"/>
    <property type="match status" value="1"/>
</dbReference>
<dbReference type="InterPro" id="IPR000608">
    <property type="entry name" value="UBQ-conjugat_E2_core"/>
</dbReference>
<dbReference type="InterPro" id="IPR023313">
    <property type="entry name" value="UBQ-conjugating_AS"/>
</dbReference>
<dbReference type="InterPro" id="IPR016135">
    <property type="entry name" value="UBQ-conjugating_enzyme/RWD"/>
</dbReference>
<dbReference type="PANTHER" id="PTHR24068">
    <property type="entry name" value="UBIQUITIN-CONJUGATING ENZYME E2"/>
    <property type="match status" value="1"/>
</dbReference>
<dbReference type="Pfam" id="PF00179">
    <property type="entry name" value="UQ_con"/>
    <property type="match status" value="1"/>
</dbReference>
<dbReference type="SMART" id="SM00212">
    <property type="entry name" value="UBCc"/>
    <property type="match status" value="1"/>
</dbReference>
<dbReference type="SUPFAM" id="SSF54495">
    <property type="entry name" value="UBC-like"/>
    <property type="match status" value="1"/>
</dbReference>
<dbReference type="PROSITE" id="PS00183">
    <property type="entry name" value="UBC_1"/>
    <property type="match status" value="1"/>
</dbReference>
<dbReference type="PROSITE" id="PS50127">
    <property type="entry name" value="UBC_2"/>
    <property type="match status" value="1"/>
</dbReference>
<comment type="function">
    <text>Catalyzes the covalent attachment of ubiquitin to other proteins. May also mediate selective proteolysis pathways.</text>
</comment>
<comment type="catalytic activity">
    <reaction evidence="1 2">
        <text>S-ubiquitinyl-[E1 ubiquitin-activating enzyme]-L-cysteine + [E2 ubiquitin-conjugating enzyme]-L-cysteine = [E1 ubiquitin-activating enzyme]-L-cysteine + S-ubiquitinyl-[E2 ubiquitin-conjugating enzyme]-L-cysteine.</text>
        <dbReference type="EC" id="2.3.2.23"/>
    </reaction>
</comment>
<comment type="pathway">
    <text evidence="1">Protein modification; protein ubiquitination.</text>
</comment>
<comment type="developmental stage">
    <text>Expressed in the conidium during the process of appressorium formation.</text>
</comment>
<comment type="induction">
    <text>By hard-surface contact. Ethylene and the host surface wax enhance this induction which is essential for appressorium formation.</text>
</comment>
<comment type="similarity">
    <text evidence="1">Belongs to the ubiquitin-conjugating enzyme family.</text>
</comment>
<organism>
    <name type="scientific">Colletotrichum gloeosporioides</name>
    <name type="common">Anthracnose fungus</name>
    <name type="synonym">Glomerella cingulata</name>
    <dbReference type="NCBI Taxonomy" id="474922"/>
    <lineage>
        <taxon>Eukaryota</taxon>
        <taxon>Fungi</taxon>
        <taxon>Dikarya</taxon>
        <taxon>Ascomycota</taxon>
        <taxon>Pezizomycotina</taxon>
        <taxon>Sordariomycetes</taxon>
        <taxon>Hypocreomycetidae</taxon>
        <taxon>Glomerellales</taxon>
        <taxon>Glomerellaceae</taxon>
        <taxon>Colletotrichum</taxon>
        <taxon>Colletotrichum gloeosporioides species complex</taxon>
    </lineage>
</organism>
<keyword id="KW-0067">ATP-binding</keyword>
<keyword id="KW-0547">Nucleotide-binding</keyword>
<keyword id="KW-0808">Transferase</keyword>
<keyword id="KW-0833">Ubl conjugation pathway</keyword>